<protein>
    <recommendedName>
        <fullName>Capsid protein</fullName>
        <shortName>CP</shortName>
    </recommendedName>
    <alternativeName>
        <fullName>Coat protein</fullName>
    </alternativeName>
</protein>
<dbReference type="EMBL" id="D28780">
    <property type="protein sequence ID" value="BAA21697.1"/>
    <property type="molecule type" value="Genomic_RNA"/>
</dbReference>
<dbReference type="SMR" id="O40980"/>
<dbReference type="Proteomes" id="UP000246397">
    <property type="component" value="Genome"/>
</dbReference>
<dbReference type="GO" id="GO:1990904">
    <property type="term" value="C:ribonucleoprotein complex"/>
    <property type="evidence" value="ECO:0007669"/>
    <property type="project" value="UniProtKB-KW"/>
</dbReference>
<dbReference type="GO" id="GO:0039617">
    <property type="term" value="C:T=3 icosahedral viral capsid"/>
    <property type="evidence" value="ECO:0007669"/>
    <property type="project" value="UniProtKB-KW"/>
</dbReference>
<dbReference type="GO" id="GO:0019013">
    <property type="term" value="C:viral nucleocapsid"/>
    <property type="evidence" value="ECO:0007669"/>
    <property type="project" value="UniProtKB-KW"/>
</dbReference>
<dbReference type="GO" id="GO:0003723">
    <property type="term" value="F:RNA binding"/>
    <property type="evidence" value="ECO:0007669"/>
    <property type="project" value="UniProtKB-KW"/>
</dbReference>
<dbReference type="GO" id="GO:0005198">
    <property type="term" value="F:structural molecule activity"/>
    <property type="evidence" value="ECO:0007669"/>
    <property type="project" value="InterPro"/>
</dbReference>
<dbReference type="Gene3D" id="2.60.120.530">
    <property type="entry name" value="Cucumovirus coat protein, subunit A"/>
    <property type="match status" value="1"/>
</dbReference>
<dbReference type="InterPro" id="IPR000247">
    <property type="entry name" value="Cucumovirus_coat"/>
</dbReference>
<dbReference type="InterPro" id="IPR037137">
    <property type="entry name" value="Cucumovirus_coat_Asu_sf"/>
</dbReference>
<dbReference type="Pfam" id="PF00760">
    <property type="entry name" value="Cucumo_coat"/>
    <property type="match status" value="1"/>
</dbReference>
<dbReference type="PRINTS" id="PR00222">
    <property type="entry name" value="CUCUMOCOAT"/>
</dbReference>
<dbReference type="SUPFAM" id="SSF88633">
    <property type="entry name" value="Positive stranded ssRNA viruses"/>
    <property type="match status" value="1"/>
</dbReference>
<organismHost>
    <name type="scientific">Cucumis sativus</name>
    <name type="common">Cucumber</name>
    <dbReference type="NCBI Taxonomy" id="3659"/>
</organismHost>
<organismHost>
    <name type="scientific">Solanum lycopersicum</name>
    <name type="common">Tomato</name>
    <name type="synonym">Lycopersicon esculentum</name>
    <dbReference type="NCBI Taxonomy" id="4081"/>
</organismHost>
<organismHost>
    <name type="scientific">Spinacia oleracea</name>
    <name type="common">Spinach</name>
    <dbReference type="NCBI Taxonomy" id="3562"/>
</organismHost>
<keyword id="KW-0007">Acetylation</keyword>
<keyword id="KW-0167">Capsid protein</keyword>
<keyword id="KW-0687">Ribonucleoprotein</keyword>
<keyword id="KW-0694">RNA-binding</keyword>
<keyword id="KW-1142">T=3 icosahedral capsid protein</keyword>
<keyword id="KW-0543">Viral nucleoprotein</keyword>
<keyword id="KW-0946">Virion</keyword>
<reference key="1">
    <citation type="journal article" date="1995" name="Arch. Virol.">
        <title>Complete genomic RNA sequences of cucumber mosaic virus strain NT9 from Taiwan.</title>
        <authorList>
            <person name="Hsu Y.-H."/>
            <person name="Wu C.W."/>
            <person name="Lin B.Y."/>
            <person name="Chen H.Y."/>
            <person name="Lee M.F."/>
            <person name="Tsai C.H."/>
        </authorList>
    </citation>
    <scope>NUCLEOTIDE SEQUENCE [GENOMIC RNA]</scope>
</reference>
<gene>
    <name type="ORF">ORF3b</name>
</gene>
<comment type="function">
    <text evidence="1">Capsid protein. Probably binds RNA and plays a role in packaging (By similarity).</text>
</comment>
<comment type="subcellular location">
    <subcellularLocation>
        <location evidence="3">Virion</location>
    </subcellularLocation>
</comment>
<comment type="domain">
    <text evidence="1">The N-terminal arginine-rich stretch does not seem to be the major RNA-binding region that allows formation of an infectious ribonucleoprotein complex.</text>
</comment>
<comment type="similarity">
    <text evidence="3">Belongs to the cucumovirus capsid protein family.</text>
</comment>
<sequence length="218" mass="24087">MDKSESTSAGRNRRRRPRRGSRSAPSSADANFRVLSQQLSRLNKTLAAGRPTINHPTFVGSERCKPGYTFTSITLKPPKIDRGSYYGKRLLLPDSVTEFDKKLVSRIQIRVNPLPKFDSTVWVTVRKVSASSDLSVAAISAMFADGASPVLVYQYAASGVQANNKLLYDLSAMRADIGDMRKYAVLVYSKDDALETDELVLHVDIEHQRIPTSGVLPV</sequence>
<evidence type="ECO:0000250" key="1"/>
<evidence type="ECO:0000256" key="2">
    <source>
        <dbReference type="SAM" id="MobiDB-lite"/>
    </source>
</evidence>
<evidence type="ECO:0000305" key="3"/>
<proteinExistence type="inferred from homology"/>
<accession>O40980</accession>
<feature type="chain" id="PRO_0000083214" description="Capsid protein">
    <location>
        <begin position="1"/>
        <end position="218"/>
    </location>
</feature>
<feature type="region of interest" description="Disordered" evidence="2">
    <location>
        <begin position="1"/>
        <end position="28"/>
    </location>
</feature>
<feature type="compositionally biased region" description="Basic residues" evidence="2">
    <location>
        <begin position="11"/>
        <end position="21"/>
    </location>
</feature>
<feature type="modified residue" description="N-acetylmethionine; by host" evidence="1">
    <location>
        <position position="1"/>
    </location>
</feature>
<name>CAPSD_CMVNT</name>
<organism>
    <name type="scientific">Cucumber mosaic virus (strain NT9)</name>
    <name type="common">CMV</name>
    <dbReference type="NCBI Taxonomy" id="117124"/>
    <lineage>
        <taxon>Viruses</taxon>
        <taxon>Riboviria</taxon>
        <taxon>Orthornavirae</taxon>
        <taxon>Kitrinoviricota</taxon>
        <taxon>Alsuviricetes</taxon>
        <taxon>Martellivirales</taxon>
        <taxon>Bromoviridae</taxon>
        <taxon>Cucumovirus</taxon>
        <taxon>Cucumber mosaic virus</taxon>
    </lineage>
</organism>